<gene>
    <name type="ORF">IIV3-107R</name>
</gene>
<protein>
    <recommendedName>
        <fullName>Uncharacterized protein 107R</fullName>
    </recommendedName>
</protein>
<name>VF117_IIV3</name>
<organismHost>
    <name type="scientific">Aedes vexans</name>
    <name type="common">Inland floodwater mosquito</name>
    <name type="synonym">Culex vexans</name>
    <dbReference type="NCBI Taxonomy" id="7163"/>
</organismHost>
<organismHost>
    <name type="scientific">Culex territans</name>
    <dbReference type="NCBI Taxonomy" id="42431"/>
</organismHost>
<organismHost>
    <name type="scientific">Culiseta annulata</name>
    <dbReference type="NCBI Taxonomy" id="332058"/>
</organismHost>
<organismHost>
    <name type="scientific">Ochlerotatus sollicitans</name>
    <name type="common">eastern saltmarsh mosquito</name>
    <dbReference type="NCBI Taxonomy" id="310513"/>
</organismHost>
<organismHost>
    <name type="scientific">Ochlerotatus taeniorhynchus</name>
    <name type="common">Black salt marsh mosquito</name>
    <name type="synonym">Aedes taeniorhynchus</name>
    <dbReference type="NCBI Taxonomy" id="329105"/>
</organismHost>
<organismHost>
    <name type="scientific">Psorophora ferox</name>
    <dbReference type="NCBI Taxonomy" id="7183"/>
</organismHost>
<sequence length="262" mass="27818">MMNNSITLLLALLVGLVGFAFTNKKRALVREDFLPPMSFKVDRVAAPNQKFADCNMFWSVPKSPLLAATTSAATPTAQQQQQDGGVSALDPLLTADGDASQPIVYDRFIYANKKSRLRQHGDPIRGDLPIIPHNSDWFRPSVTPHLDLKEGALQAIGGFDNGTNNQLSALMNASAGNALQTFGGAAFSGPGGLASNLGLAGPQQPLVSQPPMTGSLPARYMSALPYGSNLMTGQTATGMIPQYTAQKLVHVDRAGDVQVLRS</sequence>
<reference key="1">
    <citation type="journal article" date="2006" name="J. Virol.">
        <title>Genome of invertebrate iridescent virus type 3 (mosquito iridescent virus).</title>
        <authorList>
            <person name="Delhon G."/>
            <person name="Tulman E.R."/>
            <person name="Afonso C.L."/>
            <person name="Lu Z."/>
            <person name="Becnel J.J."/>
            <person name="Moser B.A."/>
            <person name="Kutish G.F."/>
            <person name="Rock D.L."/>
        </authorList>
    </citation>
    <scope>NUCLEOTIDE SEQUENCE [LARGE SCALE GENOMIC DNA]</scope>
</reference>
<keyword id="KW-1185">Reference proteome</keyword>
<keyword id="KW-0732">Signal</keyword>
<dbReference type="EMBL" id="DQ643392">
    <property type="protein sequence ID" value="ABF82137.1"/>
    <property type="molecule type" value="Genomic_DNA"/>
</dbReference>
<dbReference type="RefSeq" id="YP_654679.1">
    <property type="nucleotide sequence ID" value="NC_008187.1"/>
</dbReference>
<dbReference type="KEGG" id="vg:4156318"/>
<dbReference type="OrthoDB" id="6377at10239"/>
<dbReference type="Proteomes" id="UP000001358">
    <property type="component" value="Genome"/>
</dbReference>
<dbReference type="InterPro" id="IPR043882">
    <property type="entry name" value="DUF5850"/>
</dbReference>
<dbReference type="Pfam" id="PF19168">
    <property type="entry name" value="DUF5850"/>
    <property type="match status" value="1"/>
</dbReference>
<comment type="similarity">
    <text evidence="2">Belongs to the IIV-6 117L family.</text>
</comment>
<organism>
    <name type="scientific">Invertebrate iridescent virus 3</name>
    <name type="common">IIV-3</name>
    <name type="synonym">Mosquito iridescent virus</name>
    <dbReference type="NCBI Taxonomy" id="345201"/>
    <lineage>
        <taxon>Viruses</taxon>
        <taxon>Varidnaviria</taxon>
        <taxon>Bamfordvirae</taxon>
        <taxon>Nucleocytoviricota</taxon>
        <taxon>Megaviricetes</taxon>
        <taxon>Pimascovirales</taxon>
        <taxon>Iridoviridae</taxon>
        <taxon>Betairidovirinae</taxon>
        <taxon>Chloriridovirus</taxon>
    </lineage>
</organism>
<evidence type="ECO:0000255" key="1"/>
<evidence type="ECO:0000305" key="2"/>
<accession>Q196V3</accession>
<feature type="signal peptide" evidence="1">
    <location>
        <begin position="1"/>
        <end position="22"/>
    </location>
</feature>
<feature type="chain" id="PRO_0000377925" description="Uncharacterized protein 107R">
    <location>
        <begin position="23"/>
        <end position="262"/>
    </location>
</feature>
<proteinExistence type="inferred from homology"/>